<comment type="subcellular location">
    <subcellularLocation>
        <location evidence="1">Cytoplasm</location>
    </subcellularLocation>
</comment>
<comment type="similarity">
    <text evidence="1">Belongs to the TACO1 family.</text>
</comment>
<evidence type="ECO:0000255" key="1">
    <source>
        <dbReference type="HAMAP-Rule" id="MF_00693"/>
    </source>
</evidence>
<keyword id="KW-0963">Cytoplasm</keyword>
<keyword id="KW-0238">DNA-binding</keyword>
<keyword id="KW-0804">Transcription</keyword>
<keyword id="KW-0805">Transcription regulation</keyword>
<protein>
    <recommendedName>
        <fullName evidence="1">Probable transcriptional regulatory protein CbuK_1793</fullName>
    </recommendedName>
</protein>
<proteinExistence type="inferred from homology"/>
<gene>
    <name type="ordered locus">CbuK_1793</name>
</gene>
<name>Y1793_COXB1</name>
<feature type="chain" id="PRO_1000132180" description="Probable transcriptional regulatory protein CbuK_1793">
    <location>
        <begin position="1"/>
        <end position="244"/>
    </location>
</feature>
<sequence length="244" mass="26572">MAGHSKWANIKHAKARQDAKRGKVFTKLIREITVAARLGGEDIDSNPRLRAVVDKAFAANMPKDTITRAIKRGAGSGAGDNLVEVRYEGYGPSGVAVMVDCLTDNKNRTVAEVRHAFSKCDGNLGTEGSVAYLFKQRGLITFPPNSDEEKIMEIALEVGAEDVTTNDDGSIDVTTLPEDFEKIRNAMKAADLNPSHAEVTVLASTEVGLDKDSAEQMLRLTEMLEDLDDVQNVYSNADYPEEVL</sequence>
<accession>B6J503</accession>
<reference key="1">
    <citation type="journal article" date="2009" name="Infect. Immun.">
        <title>Comparative genomics reveal extensive transposon-mediated genomic plasticity and diversity among potential effector proteins within the genus Coxiella.</title>
        <authorList>
            <person name="Beare P.A."/>
            <person name="Unsworth N."/>
            <person name="Andoh M."/>
            <person name="Voth D.E."/>
            <person name="Omsland A."/>
            <person name="Gilk S.D."/>
            <person name="Williams K.P."/>
            <person name="Sobral B.W."/>
            <person name="Kupko J.J. III"/>
            <person name="Porcella S.F."/>
            <person name="Samuel J.E."/>
            <person name="Heinzen R.A."/>
        </authorList>
    </citation>
    <scope>NUCLEOTIDE SEQUENCE [LARGE SCALE GENOMIC DNA]</scope>
    <source>
        <strain>CbuK_Q154</strain>
    </source>
</reference>
<organism>
    <name type="scientific">Coxiella burnetii (strain CbuK_Q154)</name>
    <name type="common">Coxiella burnetii (strain Q154)</name>
    <dbReference type="NCBI Taxonomy" id="434924"/>
    <lineage>
        <taxon>Bacteria</taxon>
        <taxon>Pseudomonadati</taxon>
        <taxon>Pseudomonadota</taxon>
        <taxon>Gammaproteobacteria</taxon>
        <taxon>Legionellales</taxon>
        <taxon>Coxiellaceae</taxon>
        <taxon>Coxiella</taxon>
    </lineage>
</organism>
<dbReference type="EMBL" id="CP001020">
    <property type="protein sequence ID" value="ACJ20920.1"/>
    <property type="molecule type" value="Genomic_DNA"/>
</dbReference>
<dbReference type="RefSeq" id="WP_005772098.1">
    <property type="nucleotide sequence ID" value="NC_011528.1"/>
</dbReference>
<dbReference type="SMR" id="B6J503"/>
<dbReference type="KEGG" id="cbc:CbuK_1793"/>
<dbReference type="HOGENOM" id="CLU_062974_2_2_6"/>
<dbReference type="GO" id="GO:0005829">
    <property type="term" value="C:cytosol"/>
    <property type="evidence" value="ECO:0007669"/>
    <property type="project" value="TreeGrafter"/>
</dbReference>
<dbReference type="GO" id="GO:0003677">
    <property type="term" value="F:DNA binding"/>
    <property type="evidence" value="ECO:0007669"/>
    <property type="project" value="UniProtKB-UniRule"/>
</dbReference>
<dbReference type="GO" id="GO:0006355">
    <property type="term" value="P:regulation of DNA-templated transcription"/>
    <property type="evidence" value="ECO:0007669"/>
    <property type="project" value="UniProtKB-UniRule"/>
</dbReference>
<dbReference type="FunFam" id="1.10.10.200:FF:000001">
    <property type="entry name" value="Probable transcriptional regulatory protein YebC"/>
    <property type="match status" value="1"/>
</dbReference>
<dbReference type="FunFam" id="3.30.70.980:FF:000002">
    <property type="entry name" value="Probable transcriptional regulatory protein YebC"/>
    <property type="match status" value="1"/>
</dbReference>
<dbReference type="Gene3D" id="1.10.10.200">
    <property type="match status" value="1"/>
</dbReference>
<dbReference type="Gene3D" id="3.30.70.980">
    <property type="match status" value="2"/>
</dbReference>
<dbReference type="HAMAP" id="MF_00693">
    <property type="entry name" value="Transcrip_reg_TACO1"/>
    <property type="match status" value="1"/>
</dbReference>
<dbReference type="InterPro" id="IPR017856">
    <property type="entry name" value="Integrase-like_N"/>
</dbReference>
<dbReference type="InterPro" id="IPR048300">
    <property type="entry name" value="TACO1_YebC-like_2nd/3rd_dom"/>
</dbReference>
<dbReference type="InterPro" id="IPR049083">
    <property type="entry name" value="TACO1_YebC_N"/>
</dbReference>
<dbReference type="InterPro" id="IPR002876">
    <property type="entry name" value="Transcrip_reg_TACO1-like"/>
</dbReference>
<dbReference type="InterPro" id="IPR026564">
    <property type="entry name" value="Transcrip_reg_TACO1-like_dom3"/>
</dbReference>
<dbReference type="InterPro" id="IPR029072">
    <property type="entry name" value="YebC-like"/>
</dbReference>
<dbReference type="NCBIfam" id="NF001030">
    <property type="entry name" value="PRK00110.1"/>
    <property type="match status" value="1"/>
</dbReference>
<dbReference type="NCBIfam" id="NF009044">
    <property type="entry name" value="PRK12378.1"/>
    <property type="match status" value="1"/>
</dbReference>
<dbReference type="NCBIfam" id="TIGR01033">
    <property type="entry name" value="YebC/PmpR family DNA-binding transcriptional regulator"/>
    <property type="match status" value="1"/>
</dbReference>
<dbReference type="PANTHER" id="PTHR12532:SF6">
    <property type="entry name" value="TRANSCRIPTIONAL REGULATORY PROTEIN YEBC-RELATED"/>
    <property type="match status" value="1"/>
</dbReference>
<dbReference type="PANTHER" id="PTHR12532">
    <property type="entry name" value="TRANSLATIONAL ACTIVATOR OF CYTOCHROME C OXIDASE 1"/>
    <property type="match status" value="1"/>
</dbReference>
<dbReference type="Pfam" id="PF20772">
    <property type="entry name" value="TACO1_YebC_N"/>
    <property type="match status" value="1"/>
</dbReference>
<dbReference type="Pfam" id="PF01709">
    <property type="entry name" value="Transcrip_reg"/>
    <property type="match status" value="1"/>
</dbReference>
<dbReference type="SUPFAM" id="SSF75625">
    <property type="entry name" value="YebC-like"/>
    <property type="match status" value="1"/>
</dbReference>